<name>HOOK_DROMO</name>
<protein>
    <recommendedName>
        <fullName>Protein hook</fullName>
    </recommendedName>
</protein>
<reference key="1">
    <citation type="journal article" date="2007" name="Nature">
        <title>Evolution of genes and genomes on the Drosophila phylogeny.</title>
        <authorList>
            <consortium name="Drosophila 12 genomes consortium"/>
        </authorList>
    </citation>
    <scope>NUCLEOTIDE SEQUENCE [LARGE SCALE GENOMIC DNA]</scope>
    <source>
        <strain>Tucson 15081-1352.22</strain>
    </source>
</reference>
<comment type="function">
    <text evidence="1">Involved in endocytic trafficking by stabilizing organelles of the endocytic pathway. Probably acts as a cytoskeletal linker protein required to tether endosome vesicles to the cytoskeleton. Involved in modulation of endocytosis at stages required for down-regulation of membrane proteins that control synapse size. Not involved in synaptic vesicle recycling. Required in R7 cells for boss endocytosis into multivesicular bodies (MVBs). Has a role in regulating adult longevity.</text>
</comment>
<comment type="subunit">
    <text evidence="1">Homodimer. Interacts with microtubules via its N-terminus.</text>
</comment>
<comment type="subcellular location">
    <subcellularLocation>
        <location evidence="1">Cytoplasm</location>
        <location evidence="1">Cytoskeleton</location>
    </subcellularLocation>
    <subcellularLocation>
        <location evidence="1">Endosome</location>
    </subcellularLocation>
    <subcellularLocation>
        <location evidence="1">Synapse</location>
    </subcellularLocation>
    <text evidence="1">Enriched at neuromuscular synapses, in both presynaptic and postsynaptic regions.</text>
</comment>
<comment type="domain">
    <text evidence="1">The coiled coil domain mediates homodimerization.</text>
</comment>
<comment type="similarity">
    <text evidence="4">Belongs to the hook family.</text>
</comment>
<sequence>MSAQNGMYYSLLEWFKTLNLNAPHANAEELSDGVALAQALNQFAPESFTNSWLSKIKSSAVGSNWRLRMSNLKKVVEGVYEYYSDVLNYTLQPDFAKPDVQAIAEKCDLTELERLLQLVLGCAVNCAKKQSYICEIMCLEEELQANIMRALQDLESSTRQSVEGGGVVSSMSRNSLSNMLEGNTKAQEERDAMAQKCFETEKKMLLLIDEKNNLQQELQKIQQEFARLELNTIGDDGVSLGPIQAGSVRYNELRRQLELVKEELLQSEGAREDLKIKAQQQEADILHMQQRIDELMKTTAELTSLKDEVDVLRESTEKLKVCEAQLETYKKKLEEYNDLKKHVKMLEERSADYVQQNAQFEEDAKRYANTKGQIELFKKEIQDLHTKLDNESSKNVKLEFDNKNLESKALALQREKDSLLKERDNLREAFDELKCGQLSTNSGSLTGNTVSRELQPAAMVDKIQRLEAENKALREGQGGQTALAQLLDDANKRCEHLREQIKAANERILSLTHASQSDDPILKENELSKQIKQLMELNEQKTLQIEESSTQNSAMQCKITQLESTLSTREQELMAYEVKYRKCVEKAKEVIKTIDPRIASGLEANILEKSIDVIEEESKTKMSTMEEQLMTSAYYRLGVNAHRDAVESKLALLMGSGQTFLARQRQSAPRKSLTTMKSK</sequence>
<dbReference type="EMBL" id="CH933807">
    <property type="protein sequence ID" value="EDW11818.1"/>
    <property type="molecule type" value="Genomic_DNA"/>
</dbReference>
<dbReference type="SMR" id="B4KE73"/>
<dbReference type="FunCoup" id="B4KE73">
    <property type="interactions" value="508"/>
</dbReference>
<dbReference type="EnsemblMetazoa" id="FBtr0163767">
    <property type="protein sequence ID" value="FBpp0162259"/>
    <property type="gene ID" value="FBgn0135799"/>
</dbReference>
<dbReference type="EnsemblMetazoa" id="XM_002002340.4">
    <property type="protein sequence ID" value="XP_002002376.1"/>
    <property type="gene ID" value="LOC6576385"/>
</dbReference>
<dbReference type="GeneID" id="6576385"/>
<dbReference type="KEGG" id="dmo:Dmoj_GI13042"/>
<dbReference type="CTD" id="35169"/>
<dbReference type="eggNOG" id="ENOG502QQM8">
    <property type="taxonomic scope" value="Eukaryota"/>
</dbReference>
<dbReference type="HOGENOM" id="CLU_011214_1_0_1"/>
<dbReference type="InParanoid" id="B4KE73"/>
<dbReference type="OMA" id="DAKYRKC"/>
<dbReference type="OrthoDB" id="49395at2759"/>
<dbReference type="PhylomeDB" id="B4KE73"/>
<dbReference type="Proteomes" id="UP000009192">
    <property type="component" value="Unassembled WGS sequence"/>
</dbReference>
<dbReference type="GO" id="GO:0005813">
    <property type="term" value="C:centrosome"/>
    <property type="evidence" value="ECO:0007669"/>
    <property type="project" value="TreeGrafter"/>
</dbReference>
<dbReference type="GO" id="GO:0005768">
    <property type="term" value="C:endosome"/>
    <property type="evidence" value="ECO:0000250"/>
    <property type="project" value="UniProtKB"/>
</dbReference>
<dbReference type="GO" id="GO:0005874">
    <property type="term" value="C:microtubule"/>
    <property type="evidence" value="ECO:0007669"/>
    <property type="project" value="UniProtKB-KW"/>
</dbReference>
<dbReference type="GO" id="GO:0045202">
    <property type="term" value="C:synapse"/>
    <property type="evidence" value="ECO:0000250"/>
    <property type="project" value="UniProtKB"/>
</dbReference>
<dbReference type="GO" id="GO:0051959">
    <property type="term" value="F:dynein light intermediate chain binding"/>
    <property type="evidence" value="ECO:0007669"/>
    <property type="project" value="TreeGrafter"/>
</dbReference>
<dbReference type="GO" id="GO:0008017">
    <property type="term" value="F:microtubule binding"/>
    <property type="evidence" value="ECO:0000250"/>
    <property type="project" value="UniProtKB"/>
</dbReference>
<dbReference type="GO" id="GO:0031122">
    <property type="term" value="P:cytoplasmic microtubule organization"/>
    <property type="evidence" value="ECO:0007669"/>
    <property type="project" value="InterPro"/>
</dbReference>
<dbReference type="GO" id="GO:0030705">
    <property type="term" value="P:cytoskeleton-dependent intracellular transport"/>
    <property type="evidence" value="ECO:0000250"/>
    <property type="project" value="UniProtKB"/>
</dbReference>
<dbReference type="GO" id="GO:0008340">
    <property type="term" value="P:determination of adult lifespan"/>
    <property type="evidence" value="ECO:0000250"/>
    <property type="project" value="UniProtKB"/>
</dbReference>
<dbReference type="GO" id="GO:0006897">
    <property type="term" value="P:endocytosis"/>
    <property type="evidence" value="ECO:0000250"/>
    <property type="project" value="UniProtKB"/>
</dbReference>
<dbReference type="CDD" id="cd22222">
    <property type="entry name" value="HkD_Hook"/>
    <property type="match status" value="1"/>
</dbReference>
<dbReference type="FunFam" id="1.10.418.10:FF:000024">
    <property type="entry name" value="Hook homolog 3 (Drosophila)"/>
    <property type="match status" value="1"/>
</dbReference>
<dbReference type="Gene3D" id="1.10.418.10">
    <property type="entry name" value="Calponin-like domain"/>
    <property type="match status" value="1"/>
</dbReference>
<dbReference type="InterPro" id="IPR001715">
    <property type="entry name" value="CH_dom"/>
</dbReference>
<dbReference type="InterPro" id="IPR036872">
    <property type="entry name" value="CH_dom_sf"/>
</dbReference>
<dbReference type="InterPro" id="IPR008636">
    <property type="entry name" value="Hook_C"/>
</dbReference>
<dbReference type="InterPro" id="IPR043936">
    <property type="entry name" value="HOOK_N"/>
</dbReference>
<dbReference type="PANTHER" id="PTHR18947">
    <property type="entry name" value="HOOK PROTEINS"/>
    <property type="match status" value="1"/>
</dbReference>
<dbReference type="PANTHER" id="PTHR18947:SF39">
    <property type="entry name" value="PROTEIN HOOK"/>
    <property type="match status" value="1"/>
</dbReference>
<dbReference type="Pfam" id="PF05622">
    <property type="entry name" value="HOOK"/>
    <property type="match status" value="1"/>
</dbReference>
<dbReference type="Pfam" id="PF19047">
    <property type="entry name" value="HOOK_N"/>
    <property type="match status" value="1"/>
</dbReference>
<dbReference type="SUPFAM" id="SSF116907">
    <property type="entry name" value="Hook domain"/>
    <property type="match status" value="1"/>
</dbReference>
<dbReference type="PROSITE" id="PS50021">
    <property type="entry name" value="CH"/>
    <property type="match status" value="1"/>
</dbReference>
<accession>B4KE73</accession>
<gene>
    <name evidence="1" type="primary">hook</name>
    <name evidence="1" type="synonym">hk</name>
    <name type="ORF">GI13042</name>
</gene>
<proteinExistence type="inferred from homology"/>
<feature type="chain" id="PRO_0000379065" description="Protein hook">
    <location>
        <begin position="1"/>
        <end position="679"/>
    </location>
</feature>
<feature type="domain" description="Calponin-homology (CH)" evidence="3">
    <location>
        <begin position="5"/>
        <end position="123"/>
    </location>
</feature>
<feature type="coiled-coil region" evidence="2">
    <location>
        <begin position="140"/>
        <end position="627"/>
    </location>
</feature>
<keyword id="KW-0175">Coiled coil</keyword>
<keyword id="KW-0963">Cytoplasm</keyword>
<keyword id="KW-0206">Cytoskeleton</keyword>
<keyword id="KW-0217">Developmental protein</keyword>
<keyword id="KW-0254">Endocytosis</keyword>
<keyword id="KW-0967">Endosome</keyword>
<keyword id="KW-0493">Microtubule</keyword>
<keyword id="KW-1185">Reference proteome</keyword>
<keyword id="KW-0770">Synapse</keyword>
<evidence type="ECO:0000250" key="1">
    <source>
        <dbReference type="UniProtKB" id="Q24185"/>
    </source>
</evidence>
<evidence type="ECO:0000255" key="2"/>
<evidence type="ECO:0000255" key="3">
    <source>
        <dbReference type="PROSITE-ProRule" id="PRU00044"/>
    </source>
</evidence>
<evidence type="ECO:0000305" key="4"/>
<organism>
    <name type="scientific">Drosophila mojavensis</name>
    <name type="common">Fruit fly</name>
    <dbReference type="NCBI Taxonomy" id="7230"/>
    <lineage>
        <taxon>Eukaryota</taxon>
        <taxon>Metazoa</taxon>
        <taxon>Ecdysozoa</taxon>
        <taxon>Arthropoda</taxon>
        <taxon>Hexapoda</taxon>
        <taxon>Insecta</taxon>
        <taxon>Pterygota</taxon>
        <taxon>Neoptera</taxon>
        <taxon>Endopterygota</taxon>
        <taxon>Diptera</taxon>
        <taxon>Brachycera</taxon>
        <taxon>Muscomorpha</taxon>
        <taxon>Ephydroidea</taxon>
        <taxon>Drosophilidae</taxon>
        <taxon>Drosophila</taxon>
    </lineage>
</organism>